<evidence type="ECO:0000250" key="1">
    <source>
        <dbReference type="UniProtKB" id="Q47KB1"/>
    </source>
</evidence>
<evidence type="ECO:0000250" key="2">
    <source>
        <dbReference type="UniProtKB" id="Q8XBI9"/>
    </source>
</evidence>
<evidence type="ECO:0000269" key="3">
    <source>
    </source>
</evidence>
<evidence type="ECO:0000269" key="4">
    <source>
    </source>
</evidence>
<evidence type="ECO:0000303" key="5">
    <source>
    </source>
</evidence>
<evidence type="ECO:0000305" key="6"/>
<evidence type="ECO:0000305" key="7">
    <source>
    </source>
</evidence>
<evidence type="ECO:0000305" key="8">
    <source>
    </source>
</evidence>
<dbReference type="EC" id="1.11.1.-" evidence="4"/>
<dbReference type="EMBL" id="U00096">
    <property type="protein sequence ID" value="AAC75484.2"/>
    <property type="molecule type" value="Genomic_DNA"/>
</dbReference>
<dbReference type="EMBL" id="AP009048">
    <property type="protein sequence ID" value="BAE76711.1"/>
    <property type="molecule type" value="Genomic_DNA"/>
</dbReference>
<dbReference type="PIR" id="F65017">
    <property type="entry name" value="F65017"/>
</dbReference>
<dbReference type="RefSeq" id="NP_416926.4">
    <property type="nucleotide sequence ID" value="NC_000913.3"/>
</dbReference>
<dbReference type="RefSeq" id="WP_001350538.1">
    <property type="nucleotide sequence ID" value="NZ_LN832404.1"/>
</dbReference>
<dbReference type="SMR" id="P76536"/>
<dbReference type="BioGRID" id="4260737">
    <property type="interactions" value="21"/>
</dbReference>
<dbReference type="DIP" id="DIP-47971N"/>
<dbReference type="FunCoup" id="P76536">
    <property type="interactions" value="23"/>
</dbReference>
<dbReference type="IntAct" id="P76536">
    <property type="interactions" value="5"/>
</dbReference>
<dbReference type="STRING" id="511145.b2431"/>
<dbReference type="PeroxiBase" id="5875">
    <property type="entry name" value="EcoDyPrx02_K12"/>
</dbReference>
<dbReference type="jPOST" id="P76536"/>
<dbReference type="PaxDb" id="511145-b2431"/>
<dbReference type="DNASU" id="946913"/>
<dbReference type="EnsemblBacteria" id="AAC75484">
    <property type="protein sequence ID" value="AAC75484"/>
    <property type="gene ID" value="b2431"/>
</dbReference>
<dbReference type="GeneID" id="946913"/>
<dbReference type="KEGG" id="ecj:JW2424"/>
<dbReference type="KEGG" id="eco:b2431"/>
<dbReference type="KEGG" id="ecoc:C3026_13505"/>
<dbReference type="PATRIC" id="fig|1411691.4.peg.4300"/>
<dbReference type="EchoBASE" id="EB3917"/>
<dbReference type="eggNOG" id="COG2837">
    <property type="taxonomic scope" value="Bacteria"/>
</dbReference>
<dbReference type="HOGENOM" id="CLU_044178_2_0_6"/>
<dbReference type="InParanoid" id="P76536"/>
<dbReference type="OMA" id="QQEAIIG"/>
<dbReference type="OrthoDB" id="3251355at2"/>
<dbReference type="PhylomeDB" id="P76536"/>
<dbReference type="BioCyc" id="EcoCyc:G7266-MONOMER"/>
<dbReference type="BioCyc" id="MetaCyc:G7266-MONOMER"/>
<dbReference type="PRO" id="PR:P76536"/>
<dbReference type="Proteomes" id="UP000000625">
    <property type="component" value="Chromosome"/>
</dbReference>
<dbReference type="GO" id="GO:0005737">
    <property type="term" value="C:cytoplasm"/>
    <property type="evidence" value="ECO:0000314"/>
    <property type="project" value="EcoCyc"/>
</dbReference>
<dbReference type="GO" id="GO:0005829">
    <property type="term" value="C:cytosol"/>
    <property type="evidence" value="ECO:0000314"/>
    <property type="project" value="EcoCyc"/>
</dbReference>
<dbReference type="GO" id="GO:0020037">
    <property type="term" value="F:heme binding"/>
    <property type="evidence" value="ECO:0000314"/>
    <property type="project" value="EcoCyc"/>
</dbReference>
<dbReference type="GO" id="GO:0046872">
    <property type="term" value="F:metal ion binding"/>
    <property type="evidence" value="ECO:0007669"/>
    <property type="project" value="UniProtKB-KW"/>
</dbReference>
<dbReference type="GO" id="GO:0004601">
    <property type="term" value="F:peroxidase activity"/>
    <property type="evidence" value="ECO:0000314"/>
    <property type="project" value="EcoCyc"/>
</dbReference>
<dbReference type="InterPro" id="IPR011008">
    <property type="entry name" value="Dimeric_a/b-barrel"/>
</dbReference>
<dbReference type="InterPro" id="IPR048328">
    <property type="entry name" value="Dyp_perox_C"/>
</dbReference>
<dbReference type="InterPro" id="IPR048327">
    <property type="entry name" value="Dyp_perox_N"/>
</dbReference>
<dbReference type="InterPro" id="IPR006314">
    <property type="entry name" value="Dyp_peroxidase"/>
</dbReference>
<dbReference type="NCBIfam" id="TIGR01413">
    <property type="entry name" value="Dyp_perox_fam"/>
    <property type="match status" value="1"/>
</dbReference>
<dbReference type="PANTHER" id="PTHR30521">
    <property type="entry name" value="DEFERROCHELATASE/PEROXIDASE"/>
    <property type="match status" value="1"/>
</dbReference>
<dbReference type="PANTHER" id="PTHR30521:SF0">
    <property type="entry name" value="DYP-TYPE PEROXIDASE FAMILY PROTEIN"/>
    <property type="match status" value="1"/>
</dbReference>
<dbReference type="Pfam" id="PF20628">
    <property type="entry name" value="Dyp_perox_C"/>
    <property type="match status" value="1"/>
</dbReference>
<dbReference type="Pfam" id="PF04261">
    <property type="entry name" value="Dyp_perox_N"/>
    <property type="match status" value="1"/>
</dbReference>
<dbReference type="SUPFAM" id="SSF54909">
    <property type="entry name" value="Dimeric alpha+beta barrel"/>
    <property type="match status" value="1"/>
</dbReference>
<dbReference type="PROSITE" id="PS51404">
    <property type="entry name" value="DYP_PEROXIDASE"/>
    <property type="match status" value="1"/>
</dbReference>
<organism>
    <name type="scientific">Escherichia coli (strain K12)</name>
    <dbReference type="NCBI Taxonomy" id="83333"/>
    <lineage>
        <taxon>Bacteria</taxon>
        <taxon>Pseudomonadati</taxon>
        <taxon>Pseudomonadota</taxon>
        <taxon>Gammaproteobacteria</taxon>
        <taxon>Enterobacterales</taxon>
        <taxon>Enterobacteriaceae</taxon>
        <taxon>Escherichia</taxon>
    </lineage>
</organism>
<accession>P76536</accession>
<accession>Q2MAJ5</accession>
<comment type="function">
    <text evidence="4">Has both general peroxidase activity and dye-decolorizing activity. Can catalyze the oxidation of both protoporphyrinogen IX and coproporphyrinogen III to their corresponding porphyrins. Also efficiently decolorizes the dyes alizarin red and Cibacron blue F3GA.</text>
</comment>
<comment type="cofactor">
    <cofactor evidence="7 8">
        <name>heme b</name>
        <dbReference type="ChEBI" id="CHEBI:60344"/>
    </cofactor>
    <text evidence="2">Binds 1 heme b (iron(II)-protoporphyrin IX) group non-covalently.</text>
</comment>
<comment type="subcellular location">
    <subcellularLocation>
        <location evidence="3">Cytoplasm</location>
    </subcellularLocation>
</comment>
<comment type="similarity">
    <text evidence="6">Belongs to the DyP-type peroxidase family.</text>
</comment>
<comment type="caution">
    <text evidence="4 7">Was originally thought to be a deferrochelatase, which promotes iron extraction from exogenous heme source, preserving the tetrapyrrol ring intact (PubMed:19564607). However, Dailey et al. were unable to reproduce the in vitro dechelation reaction (PubMed:22068980). They suggest that YfeX is a typical dye-decolorizing peroxidase and not a dechelatase, and that the protoporphyrin reported by Letoffe et al. to accumulate when YfeX is overexpressed likely arises from the intracellular oxidation of endogenously synthesized protoporphyrinogen and not from dechelation of exogenously supplied heme (PubMed:22068980).</text>
</comment>
<gene>
    <name type="primary">yfeX</name>
    <name type="ordered locus">b2431</name>
    <name type="ordered locus">JW2424</name>
</gene>
<sequence length="299" mass="33052">MSQVQSGILPEHCRAAIWIEANVKGEVDALRAASKTFADKLATFEAKFPDAHLGAVVAFGNNTWRALSGGVGAEELKDFPGYGKGLAPTTQFDVLIHILSLRHDVNFSVAQAAMEAFGDCIEVKEEIHGFRWVEERDLSGFVDGTENPAGEETRREVAVIKDGVDAGGSYVFVQRWEHNLKQLNRMSVHDQEMVIGRTKEANEEIDGDERPETSHLTRVDLKEDGKGLKIVRQSLPYGTASGTHGLYFCAYCARLHNIEQQLLSMFGDTDGKRDAMLRFTKPVTGGYYFAPSLDKLMAL</sequence>
<feature type="chain" id="PRO_0000201328" description="Dye-decolorizing peroxidase YfeX">
    <location>
        <begin position="1"/>
        <end position="299"/>
    </location>
</feature>
<feature type="active site" description="Proton acceptor" evidence="1">
    <location>
        <position position="143"/>
    </location>
</feature>
<feature type="binding site" description="proximal binding residue" evidence="2">
    <location>
        <position position="215"/>
    </location>
    <ligand>
        <name>heme</name>
        <dbReference type="ChEBI" id="CHEBI:30413"/>
    </ligand>
    <ligandPart>
        <name>Fe</name>
        <dbReference type="ChEBI" id="CHEBI:18248"/>
    </ligandPart>
</feature>
<feature type="mutagenesis site" description="Strong decrease in affinity for heme and protoporphyrin." evidence="3">
    <original>H</original>
    <variation>A</variation>
    <location>
        <position position="215"/>
    </location>
</feature>
<name>YFEX_ECOLI</name>
<proteinExistence type="evidence at protein level"/>
<keyword id="KW-0963">Cytoplasm</keyword>
<keyword id="KW-0349">Heme</keyword>
<keyword id="KW-0408">Iron</keyword>
<keyword id="KW-0479">Metal-binding</keyword>
<keyword id="KW-0560">Oxidoreductase</keyword>
<keyword id="KW-0575">Peroxidase</keyword>
<keyword id="KW-1185">Reference proteome</keyword>
<protein>
    <recommendedName>
        <fullName evidence="6">Dye-decolorizing peroxidase YfeX</fullName>
        <ecNumber evidence="4">1.11.1.-</ecNumber>
    </recommendedName>
    <alternativeName>
        <fullName evidence="5">Porphyrinogen oxidase</fullName>
    </alternativeName>
</protein>
<reference key="1">
    <citation type="journal article" date="1997" name="Science">
        <title>The complete genome sequence of Escherichia coli K-12.</title>
        <authorList>
            <person name="Blattner F.R."/>
            <person name="Plunkett G. III"/>
            <person name="Bloch C.A."/>
            <person name="Perna N.T."/>
            <person name="Burland V."/>
            <person name="Riley M."/>
            <person name="Collado-Vides J."/>
            <person name="Glasner J.D."/>
            <person name="Rode C.K."/>
            <person name="Mayhew G.F."/>
            <person name="Gregor J."/>
            <person name="Davis N.W."/>
            <person name="Kirkpatrick H.A."/>
            <person name="Goeden M.A."/>
            <person name="Rose D.J."/>
            <person name="Mau B."/>
            <person name="Shao Y."/>
        </authorList>
    </citation>
    <scope>NUCLEOTIDE SEQUENCE [LARGE SCALE GENOMIC DNA]</scope>
    <source>
        <strain>K12 / MG1655 / ATCC 47076</strain>
    </source>
</reference>
<reference key="2">
    <citation type="journal article" date="2006" name="Mol. Syst. Biol.">
        <title>Highly accurate genome sequences of Escherichia coli K-12 strains MG1655 and W3110.</title>
        <authorList>
            <person name="Hayashi K."/>
            <person name="Morooka N."/>
            <person name="Yamamoto Y."/>
            <person name="Fujita K."/>
            <person name="Isono K."/>
            <person name="Choi S."/>
            <person name="Ohtsubo E."/>
            <person name="Baba T."/>
            <person name="Wanner B.L."/>
            <person name="Mori H."/>
            <person name="Horiuchi T."/>
        </authorList>
    </citation>
    <scope>NUCLEOTIDE SEQUENCE [LARGE SCALE GENOMIC DNA]</scope>
    <source>
        <strain>K12 / W3110 / ATCC 27325 / DSM 5911</strain>
    </source>
</reference>
<reference key="3">
    <citation type="journal article" date="2009" name="Proc. Natl. Acad. Sci. U.S.A.">
        <title>Bacteria capture iron from heme by keeping tetrapyrrol skeleton intact.</title>
        <authorList>
            <person name="Letoffe S."/>
            <person name="Heuck G."/>
            <person name="Delepelaire P."/>
            <person name="Lange N."/>
            <person name="Wandersman C."/>
        </authorList>
    </citation>
    <scope>PRELIMINARY FUNCTION AS A DEFERROCHELATASE</scope>
    <scope>COFACTOR</scope>
    <scope>SUBCELLULAR LOCATION</scope>
    <scope>MUTAGENESIS OF HIS-215</scope>
    <source>
        <strain>K12 / MG1655 / ATCC 47076</strain>
    </source>
</reference>
<reference key="4">
    <citation type="journal article" date="2011" name="MBio">
        <title>The Escherichia coli protein YfeX functions as a porphyrinogen oxidase, not a heme dechelatase.</title>
        <authorList>
            <person name="Dailey H.A."/>
            <person name="Septer A.N."/>
            <person name="Daugherty L."/>
            <person name="Thames D."/>
            <person name="Gerdes S."/>
            <person name="Stabb E.V."/>
            <person name="Dunn A.K."/>
            <person name="Dailey T.A."/>
            <person name="Phillips J.D."/>
        </authorList>
    </citation>
    <scope>FUNCTION AS AN OXIDASE</scope>
    <scope>COFACTOR</scope>
</reference>